<proteinExistence type="inferred from homology"/>
<keyword id="KW-0067">ATP-binding</keyword>
<keyword id="KW-0143">Chaperone</keyword>
<keyword id="KW-0479">Metal-binding</keyword>
<keyword id="KW-0547">Nucleotide-binding</keyword>
<keyword id="KW-0862">Zinc</keyword>
<gene>
    <name evidence="1" type="primary">clpX</name>
    <name type="ordered locus">PsycPRwf_0305</name>
</gene>
<protein>
    <recommendedName>
        <fullName evidence="1">ATP-dependent Clp protease ATP-binding subunit ClpX</fullName>
    </recommendedName>
</protein>
<organism>
    <name type="scientific">Psychrobacter sp. (strain PRwf-1)</name>
    <dbReference type="NCBI Taxonomy" id="349106"/>
    <lineage>
        <taxon>Bacteria</taxon>
        <taxon>Pseudomonadati</taxon>
        <taxon>Pseudomonadota</taxon>
        <taxon>Gammaproteobacteria</taxon>
        <taxon>Moraxellales</taxon>
        <taxon>Moraxellaceae</taxon>
        <taxon>Psychrobacter</taxon>
    </lineage>
</organism>
<sequence length="425" mass="46340">MAKDKTPQCSFCGKKKDEVAQLIAADDANICNECVALCTDLIEEGDLNTVDSEDGEVNTWLTKKLPTPKEIREHLDGYVIGQETAKKALSVAVYNHYKRLKVAAKLAEDKKQAKLGADDAMVELSKSNILLIGPTGSGKTLLAQTLARMLDVPFAMADATTLTEAGYVGEDVENIVQKLLQAADYDVEKAEQGIIYVDEIDKISKKGENMSITRDVSGEGVQQALLKLIEGTVAAIPPHGGRKHPNQELIQVDTSNILIIVGGAFSGLDKVIQQRTEKTGIGFNAEVKSKDDGKQLSELFKQVEPEDLIKFGLIPELIGRLPVIATLEELDEEALMQILTEPKNAIVKQYQYLFEMEDAELSFTEAGLKAIAHKAMERKTGARGLRSIVENALLDTMYELPSMSDAKQVVVDEDVINEGAAPKIA</sequence>
<reference key="1">
    <citation type="submission" date="2007-05" db="EMBL/GenBank/DDBJ databases">
        <title>Complete sequence of chromosome of Psychrobacter sp. PRwf-1.</title>
        <authorList>
            <consortium name="US DOE Joint Genome Institute"/>
            <person name="Copeland A."/>
            <person name="Lucas S."/>
            <person name="Lapidus A."/>
            <person name="Barry K."/>
            <person name="Detter J.C."/>
            <person name="Glavina del Rio T."/>
            <person name="Hammon N."/>
            <person name="Israni S."/>
            <person name="Dalin E."/>
            <person name="Tice H."/>
            <person name="Pitluck S."/>
            <person name="Chain P."/>
            <person name="Malfatti S."/>
            <person name="Shin M."/>
            <person name="Vergez L."/>
            <person name="Schmutz J."/>
            <person name="Larimer F."/>
            <person name="Land M."/>
            <person name="Hauser L."/>
            <person name="Kyrpides N."/>
            <person name="Kim E."/>
            <person name="Tiedje J."/>
            <person name="Richardson P."/>
        </authorList>
    </citation>
    <scope>NUCLEOTIDE SEQUENCE [LARGE SCALE GENOMIC DNA]</scope>
    <source>
        <strain>PRwf-1</strain>
    </source>
</reference>
<feature type="chain" id="PRO_1000071627" description="ATP-dependent Clp protease ATP-binding subunit ClpX">
    <location>
        <begin position="1"/>
        <end position="425"/>
    </location>
</feature>
<feature type="domain" description="ClpX-type ZB" evidence="2">
    <location>
        <begin position="1"/>
        <end position="50"/>
    </location>
</feature>
<feature type="binding site" evidence="2">
    <location>
        <position position="9"/>
    </location>
    <ligand>
        <name>Zn(2+)</name>
        <dbReference type="ChEBI" id="CHEBI:29105"/>
    </ligand>
</feature>
<feature type="binding site" evidence="2">
    <location>
        <position position="12"/>
    </location>
    <ligand>
        <name>Zn(2+)</name>
        <dbReference type="ChEBI" id="CHEBI:29105"/>
    </ligand>
</feature>
<feature type="binding site" evidence="2">
    <location>
        <position position="31"/>
    </location>
    <ligand>
        <name>Zn(2+)</name>
        <dbReference type="ChEBI" id="CHEBI:29105"/>
    </ligand>
</feature>
<feature type="binding site" evidence="2">
    <location>
        <position position="34"/>
    </location>
    <ligand>
        <name>Zn(2+)</name>
        <dbReference type="ChEBI" id="CHEBI:29105"/>
    </ligand>
</feature>
<feature type="binding site" evidence="1">
    <location>
        <begin position="134"/>
        <end position="141"/>
    </location>
    <ligand>
        <name>ATP</name>
        <dbReference type="ChEBI" id="CHEBI:30616"/>
    </ligand>
</feature>
<name>CLPX_PSYWF</name>
<comment type="function">
    <text evidence="1">ATP-dependent specificity component of the Clp protease. It directs the protease to specific substrates. Can perform chaperone functions in the absence of ClpP.</text>
</comment>
<comment type="subunit">
    <text evidence="1">Component of the ClpX-ClpP complex. Forms a hexameric ring that, in the presence of ATP, binds to fourteen ClpP subunits assembled into a disk-like structure with a central cavity, resembling the structure of eukaryotic proteasomes.</text>
</comment>
<comment type="similarity">
    <text evidence="1">Belongs to the ClpX chaperone family.</text>
</comment>
<dbReference type="EMBL" id="CP000713">
    <property type="protein sequence ID" value="ABQ93260.1"/>
    <property type="molecule type" value="Genomic_DNA"/>
</dbReference>
<dbReference type="SMR" id="A5WC69"/>
<dbReference type="STRING" id="349106.PsycPRwf_0305"/>
<dbReference type="KEGG" id="prw:PsycPRwf_0305"/>
<dbReference type="eggNOG" id="COG1219">
    <property type="taxonomic scope" value="Bacteria"/>
</dbReference>
<dbReference type="HOGENOM" id="CLU_014218_8_2_6"/>
<dbReference type="GO" id="GO:0009376">
    <property type="term" value="C:HslUV protease complex"/>
    <property type="evidence" value="ECO:0007669"/>
    <property type="project" value="TreeGrafter"/>
</dbReference>
<dbReference type="GO" id="GO:0005524">
    <property type="term" value="F:ATP binding"/>
    <property type="evidence" value="ECO:0007669"/>
    <property type="project" value="UniProtKB-UniRule"/>
</dbReference>
<dbReference type="GO" id="GO:0016887">
    <property type="term" value="F:ATP hydrolysis activity"/>
    <property type="evidence" value="ECO:0007669"/>
    <property type="project" value="InterPro"/>
</dbReference>
<dbReference type="GO" id="GO:0140662">
    <property type="term" value="F:ATP-dependent protein folding chaperone"/>
    <property type="evidence" value="ECO:0007669"/>
    <property type="project" value="InterPro"/>
</dbReference>
<dbReference type="GO" id="GO:0046983">
    <property type="term" value="F:protein dimerization activity"/>
    <property type="evidence" value="ECO:0007669"/>
    <property type="project" value="InterPro"/>
</dbReference>
<dbReference type="GO" id="GO:0051082">
    <property type="term" value="F:unfolded protein binding"/>
    <property type="evidence" value="ECO:0007669"/>
    <property type="project" value="UniProtKB-UniRule"/>
</dbReference>
<dbReference type="GO" id="GO:0008270">
    <property type="term" value="F:zinc ion binding"/>
    <property type="evidence" value="ECO:0007669"/>
    <property type="project" value="InterPro"/>
</dbReference>
<dbReference type="GO" id="GO:0051301">
    <property type="term" value="P:cell division"/>
    <property type="evidence" value="ECO:0007669"/>
    <property type="project" value="TreeGrafter"/>
</dbReference>
<dbReference type="GO" id="GO:0051603">
    <property type="term" value="P:proteolysis involved in protein catabolic process"/>
    <property type="evidence" value="ECO:0007669"/>
    <property type="project" value="TreeGrafter"/>
</dbReference>
<dbReference type="CDD" id="cd19497">
    <property type="entry name" value="RecA-like_ClpX"/>
    <property type="match status" value="1"/>
</dbReference>
<dbReference type="FunFam" id="1.10.8.60:FF:000002">
    <property type="entry name" value="ATP-dependent Clp protease ATP-binding subunit ClpX"/>
    <property type="match status" value="1"/>
</dbReference>
<dbReference type="FunFam" id="3.40.50.300:FF:000005">
    <property type="entry name" value="ATP-dependent Clp protease ATP-binding subunit ClpX"/>
    <property type="match status" value="1"/>
</dbReference>
<dbReference type="Gene3D" id="1.10.8.60">
    <property type="match status" value="1"/>
</dbReference>
<dbReference type="Gene3D" id="6.20.220.10">
    <property type="entry name" value="ClpX chaperone, C4-type zinc finger domain"/>
    <property type="match status" value="1"/>
</dbReference>
<dbReference type="Gene3D" id="3.40.50.300">
    <property type="entry name" value="P-loop containing nucleotide triphosphate hydrolases"/>
    <property type="match status" value="1"/>
</dbReference>
<dbReference type="HAMAP" id="MF_00175">
    <property type="entry name" value="ClpX"/>
    <property type="match status" value="1"/>
</dbReference>
<dbReference type="InterPro" id="IPR003593">
    <property type="entry name" value="AAA+_ATPase"/>
</dbReference>
<dbReference type="InterPro" id="IPR050052">
    <property type="entry name" value="ATP-dep_Clp_protease_ClpX"/>
</dbReference>
<dbReference type="InterPro" id="IPR003959">
    <property type="entry name" value="ATPase_AAA_core"/>
</dbReference>
<dbReference type="InterPro" id="IPR019489">
    <property type="entry name" value="Clp_ATPase_C"/>
</dbReference>
<dbReference type="InterPro" id="IPR004487">
    <property type="entry name" value="Clp_protease_ATP-bd_su_ClpX"/>
</dbReference>
<dbReference type="InterPro" id="IPR046425">
    <property type="entry name" value="ClpX_bact"/>
</dbReference>
<dbReference type="InterPro" id="IPR027417">
    <property type="entry name" value="P-loop_NTPase"/>
</dbReference>
<dbReference type="InterPro" id="IPR010603">
    <property type="entry name" value="Znf_CppX_C4"/>
</dbReference>
<dbReference type="InterPro" id="IPR038366">
    <property type="entry name" value="Znf_CppX_C4_sf"/>
</dbReference>
<dbReference type="NCBIfam" id="TIGR00382">
    <property type="entry name" value="clpX"/>
    <property type="match status" value="1"/>
</dbReference>
<dbReference type="NCBIfam" id="NF003745">
    <property type="entry name" value="PRK05342.1"/>
    <property type="match status" value="1"/>
</dbReference>
<dbReference type="PANTHER" id="PTHR48102:SF7">
    <property type="entry name" value="ATP-DEPENDENT CLP PROTEASE ATP-BINDING SUBUNIT CLPX-LIKE, MITOCHONDRIAL"/>
    <property type="match status" value="1"/>
</dbReference>
<dbReference type="PANTHER" id="PTHR48102">
    <property type="entry name" value="ATP-DEPENDENT CLP PROTEASE ATP-BINDING SUBUNIT CLPX-LIKE, MITOCHONDRIAL-RELATED"/>
    <property type="match status" value="1"/>
</dbReference>
<dbReference type="Pfam" id="PF07724">
    <property type="entry name" value="AAA_2"/>
    <property type="match status" value="1"/>
</dbReference>
<dbReference type="Pfam" id="PF10431">
    <property type="entry name" value="ClpB_D2-small"/>
    <property type="match status" value="1"/>
</dbReference>
<dbReference type="Pfam" id="PF06689">
    <property type="entry name" value="zf-C4_ClpX"/>
    <property type="match status" value="1"/>
</dbReference>
<dbReference type="SMART" id="SM00382">
    <property type="entry name" value="AAA"/>
    <property type="match status" value="1"/>
</dbReference>
<dbReference type="SMART" id="SM01086">
    <property type="entry name" value="ClpB_D2-small"/>
    <property type="match status" value="1"/>
</dbReference>
<dbReference type="SMART" id="SM00994">
    <property type="entry name" value="zf-C4_ClpX"/>
    <property type="match status" value="1"/>
</dbReference>
<dbReference type="SUPFAM" id="SSF57716">
    <property type="entry name" value="Glucocorticoid receptor-like (DNA-binding domain)"/>
    <property type="match status" value="1"/>
</dbReference>
<dbReference type="SUPFAM" id="SSF52540">
    <property type="entry name" value="P-loop containing nucleoside triphosphate hydrolases"/>
    <property type="match status" value="1"/>
</dbReference>
<dbReference type="PROSITE" id="PS51902">
    <property type="entry name" value="CLPX_ZB"/>
    <property type="match status" value="1"/>
</dbReference>
<evidence type="ECO:0000255" key="1">
    <source>
        <dbReference type="HAMAP-Rule" id="MF_00175"/>
    </source>
</evidence>
<evidence type="ECO:0000255" key="2">
    <source>
        <dbReference type="PROSITE-ProRule" id="PRU01250"/>
    </source>
</evidence>
<accession>A5WC69</accession>